<proteinExistence type="evidence at protein level"/>
<gene>
    <name type="primary">Lrch4</name>
</gene>
<keyword id="KW-0025">Alternative splicing</keyword>
<keyword id="KW-1003">Cell membrane</keyword>
<keyword id="KW-0433">Leucine-rich repeat</keyword>
<keyword id="KW-0472">Membrane</keyword>
<keyword id="KW-0597">Phosphoprotein</keyword>
<keyword id="KW-1185">Reference proteome</keyword>
<keyword id="KW-0677">Repeat</keyword>
<keyword id="KW-0812">Transmembrane</keyword>
<keyword id="KW-1133">Transmembrane helix</keyword>
<sequence>MAAAVAGPLAAGGEEAAASVSLPGSPGLPGSRSAERALEEAVATGTLNLSNRRLKHFPRGAARSYDLSDITQADLSRNRFPEVPEAACQLVSLEGLSLYHNCLKCLNPALGNLTALTYLNLSRNQLSSLPPYICQLPLRVLIISNNKLGALPPDISTLGSLRQLDVSSNELQSLPVELCSLRSLRDLNVRRNQLSTLPDELGDLPLVRLDFSCNRISRIPVSFCRLRHLQVVLLDSNPLQSPPAQICLKGKLHIFKYLTMEAGRRGAALGDLVPSRPPSFSPCPAEDLFPGRRYDGGLDSGFHSVDSGSKRWSGNESTDDFSELSFRISELARDPRGPRQPREDGAGDGDLEQIDFIDSHVPGEDEDRSAAEEQLPSELSLVAGDVEKPSSSRREEPAGEERRRPDTLQLWQERERKQQQQSGGWGSPRKDSVLKRGIRAAGAGASAPSTQATCNGPPKSSTTQLGVSGGQGAPTPPPTSQDPLPVSGPVTAPVPRPLGSIQRPNSFLFRSSSQSGSSPSSPESVLRPRPFPQEKELISQLRQVLESRLQQPLPEDLAEALANGVLLCQLANQLRPRSVPFIHVPSPAVPKLSALKSRKNVESFLEACRKMGVPEADLCSPSDLLRGTAQGLQTVLEAVILVGGKAPLPVQPSSGLGGFLLFYVVFMLLLYVVYTRLLGS</sequence>
<accession>Q921G6</accession>
<accession>H3BLL3</accession>
<organism>
    <name type="scientific">Mus musculus</name>
    <name type="common">Mouse</name>
    <dbReference type="NCBI Taxonomy" id="10090"/>
    <lineage>
        <taxon>Eukaryota</taxon>
        <taxon>Metazoa</taxon>
        <taxon>Chordata</taxon>
        <taxon>Craniata</taxon>
        <taxon>Vertebrata</taxon>
        <taxon>Euteleostomi</taxon>
        <taxon>Mammalia</taxon>
        <taxon>Eutheria</taxon>
        <taxon>Euarchontoglires</taxon>
        <taxon>Glires</taxon>
        <taxon>Rodentia</taxon>
        <taxon>Myomorpha</taxon>
        <taxon>Muroidea</taxon>
        <taxon>Muridae</taxon>
        <taxon>Murinae</taxon>
        <taxon>Mus</taxon>
        <taxon>Mus</taxon>
    </lineage>
</organism>
<reference evidence="6" key="1">
    <citation type="journal article" date="2009" name="PLoS Biol.">
        <title>Lineage-specific biology revealed by a finished genome assembly of the mouse.</title>
        <authorList>
            <person name="Church D.M."/>
            <person name="Goodstadt L."/>
            <person name="Hillier L.W."/>
            <person name="Zody M.C."/>
            <person name="Goldstein S."/>
            <person name="She X."/>
            <person name="Bult C.J."/>
            <person name="Agarwala R."/>
            <person name="Cherry J.L."/>
            <person name="DiCuccio M."/>
            <person name="Hlavina W."/>
            <person name="Kapustin Y."/>
            <person name="Meric P."/>
            <person name="Maglott D."/>
            <person name="Birtle Z."/>
            <person name="Marques A.C."/>
            <person name="Graves T."/>
            <person name="Zhou S."/>
            <person name="Teague B."/>
            <person name="Potamousis K."/>
            <person name="Churas C."/>
            <person name="Place M."/>
            <person name="Herschleb J."/>
            <person name="Runnheim R."/>
            <person name="Forrest D."/>
            <person name="Amos-Landgraf J."/>
            <person name="Schwartz D.C."/>
            <person name="Cheng Z."/>
            <person name="Lindblad-Toh K."/>
            <person name="Eichler E.E."/>
            <person name="Ponting C.P."/>
        </authorList>
    </citation>
    <scope>NUCLEOTIDE SEQUENCE [LARGE SCALE GENOMIC DNA] (ISOFORM 2)</scope>
    <source>
        <strain evidence="6">C57BL/6J</strain>
    </source>
</reference>
<reference key="2">
    <citation type="journal article" date="2004" name="Genome Res.">
        <title>The status, quality, and expansion of the NIH full-length cDNA project: the Mammalian Gene Collection (MGC).</title>
        <authorList>
            <consortium name="The MGC Project Team"/>
        </authorList>
    </citation>
    <scope>NUCLEOTIDE SEQUENCE [LARGE SCALE MRNA]</scope>
</reference>
<reference key="3">
    <citation type="journal article" date="2010" name="Cell">
        <title>A tissue-specific atlas of mouse protein phosphorylation and expression.</title>
        <authorList>
            <person name="Huttlin E.L."/>
            <person name="Jedrychowski M.P."/>
            <person name="Elias J.E."/>
            <person name="Goswami T."/>
            <person name="Rad R."/>
            <person name="Beausoleil S.A."/>
            <person name="Villen J."/>
            <person name="Haas W."/>
            <person name="Sowa M.E."/>
            <person name="Gygi S.P."/>
        </authorList>
    </citation>
    <scope>PHOSPHORYLATION [LARGE SCALE ANALYSIS] AT SER-279; SER-281 AND SER-313</scope>
    <scope>IDENTIFICATION BY MASS SPECTROMETRY [LARGE SCALE ANALYSIS]</scope>
    <source>
        <tissue>Kidney</tissue>
        <tissue>Lung</tissue>
        <tissue>Spleen</tissue>
        <tissue>Testis</tissue>
    </source>
</reference>
<reference key="4">
    <citation type="journal article" date="2019" name="J. Biol. Chem.">
        <title>Leucine-rich repeats and calponin homology containing 4 (Lrch4) regulates the innate immune response.</title>
        <authorList>
            <person name="Aloor J.J."/>
            <person name="Azzam K.M."/>
            <person name="Guardiola J.J."/>
            <person name="Gowdy K.M."/>
            <person name="Madenspacher J.H."/>
            <person name="Gabor K.A."/>
            <person name="Mueller G.A."/>
            <person name="Lin W.C."/>
            <person name="Lowe J.M."/>
            <person name="Gruzdev A."/>
            <person name="Henderson M.W."/>
            <person name="Draper D.W."/>
            <person name="Merrick B.A."/>
            <person name="Fessler M.B."/>
        </authorList>
    </citation>
    <scope>FUNCTION</scope>
    <scope>TISSUE SPECIFICITY</scope>
    <scope>SUBCELLULAR LOCATION</scope>
    <scope>LPS-BINDING</scope>
    <scope>INDUCTION BY LPS</scope>
</reference>
<feature type="chain" id="PRO_0000084481" description="Leucine-rich repeat and calponin homology domain-containing protein 4">
    <location>
        <begin position="1"/>
        <end position="680"/>
    </location>
</feature>
<feature type="transmembrane region" description="Helical" evidence="2">
    <location>
        <begin position="655"/>
        <end position="675"/>
    </location>
</feature>
<feature type="repeat" description="LRR 1" evidence="2">
    <location>
        <begin position="41"/>
        <end position="64"/>
    </location>
</feature>
<feature type="repeat" description="LRR 2" evidence="2">
    <location>
        <begin position="67"/>
        <end position="90"/>
    </location>
</feature>
<feature type="repeat" description="LRR 3" evidence="2">
    <location>
        <begin position="92"/>
        <end position="113"/>
    </location>
</feature>
<feature type="repeat" description="LRR 4" evidence="2">
    <location>
        <begin position="114"/>
        <end position="136"/>
    </location>
</feature>
<feature type="repeat" description="LRR 5" evidence="2">
    <location>
        <begin position="138"/>
        <end position="158"/>
    </location>
</feature>
<feature type="repeat" description="LRR 6" evidence="2">
    <location>
        <begin position="159"/>
        <end position="181"/>
    </location>
</feature>
<feature type="repeat" description="LRR 7" evidence="2">
    <location>
        <begin position="182"/>
        <end position="204"/>
    </location>
</feature>
<feature type="repeat" description="LRR 8" evidence="2">
    <location>
        <begin position="206"/>
        <end position="226"/>
    </location>
</feature>
<feature type="repeat" description="LRR 9" evidence="2">
    <location>
        <begin position="227"/>
        <end position="250"/>
    </location>
</feature>
<feature type="domain" description="Calponin-homology (CH)" evidence="3">
    <location>
        <begin position="531"/>
        <end position="644"/>
    </location>
</feature>
<feature type="region of interest" description="Disordered" evidence="4">
    <location>
        <begin position="1"/>
        <end position="35"/>
    </location>
</feature>
<feature type="region of interest" description="Disordered" evidence="4">
    <location>
        <begin position="329"/>
        <end position="528"/>
    </location>
</feature>
<feature type="compositionally biased region" description="Low complexity" evidence="4">
    <location>
        <begin position="1"/>
        <end position="22"/>
    </location>
</feature>
<feature type="compositionally biased region" description="Basic and acidic residues" evidence="4">
    <location>
        <begin position="330"/>
        <end position="345"/>
    </location>
</feature>
<feature type="compositionally biased region" description="Acidic residues" evidence="4">
    <location>
        <begin position="346"/>
        <end position="355"/>
    </location>
</feature>
<feature type="compositionally biased region" description="Basic and acidic residues" evidence="4">
    <location>
        <begin position="357"/>
        <end position="371"/>
    </location>
</feature>
<feature type="compositionally biased region" description="Basic and acidic residues" evidence="4">
    <location>
        <begin position="385"/>
        <end position="418"/>
    </location>
</feature>
<feature type="compositionally biased region" description="Low complexity" evidence="4">
    <location>
        <begin position="440"/>
        <end position="453"/>
    </location>
</feature>
<feature type="compositionally biased region" description="Low complexity" evidence="4">
    <location>
        <begin position="510"/>
        <end position="528"/>
    </location>
</feature>
<feature type="modified residue" description="Phosphoserine" evidence="7">
    <location>
        <position position="279"/>
    </location>
</feature>
<feature type="modified residue" description="Phosphoserine" evidence="7">
    <location>
        <position position="281"/>
    </location>
</feature>
<feature type="modified residue" description="Phosphoserine" evidence="1">
    <location>
        <position position="304"/>
    </location>
</feature>
<feature type="modified residue" description="Phosphoserine" evidence="1">
    <location>
        <position position="307"/>
    </location>
</feature>
<feature type="modified residue" description="Phosphoserine" evidence="1">
    <location>
        <position position="309"/>
    </location>
</feature>
<feature type="modified residue" description="Phosphoserine" evidence="7">
    <location>
        <position position="313"/>
    </location>
</feature>
<feature type="modified residue" description="Phosphoserine" evidence="1">
    <location>
        <position position="432"/>
    </location>
</feature>
<feature type="modified residue" description="Phosphoserine" evidence="1">
    <location>
        <position position="511"/>
    </location>
</feature>
<feature type="modified residue" description="Phosphoserine" evidence="1">
    <location>
        <position position="513"/>
    </location>
</feature>
<feature type="modified residue" description="Phosphoserine" evidence="1">
    <location>
        <position position="517"/>
    </location>
</feature>
<feature type="modified residue" description="Phosphoserine" evidence="1">
    <location>
        <position position="521"/>
    </location>
</feature>
<feature type="modified residue" description="Phosphoserine" evidence="1">
    <location>
        <position position="586"/>
    </location>
</feature>
<feature type="splice variant" id="VSP_061971" description="In isoform 2.">
    <original>ADLCSPSDLLRGTAQGLQTVLEAVILVGGKAPLP</original>
    <variation>ESLCQPHHILEEEGAPGRGLPHIAAVLHALLEQP</variation>
    <location>
        <begin position="616"/>
        <end position="649"/>
    </location>
</feature>
<feature type="splice variant" id="VSP_061972" description="In isoform 2.">
    <location>
        <begin position="650"/>
        <end position="680"/>
    </location>
</feature>
<evidence type="ECO:0000250" key="1">
    <source>
        <dbReference type="UniProtKB" id="O75427"/>
    </source>
</evidence>
<evidence type="ECO:0000255" key="2"/>
<evidence type="ECO:0000255" key="3">
    <source>
        <dbReference type="PROSITE-ProRule" id="PRU00044"/>
    </source>
</evidence>
<evidence type="ECO:0000256" key="4">
    <source>
        <dbReference type="SAM" id="MobiDB-lite"/>
    </source>
</evidence>
<evidence type="ECO:0000269" key="5">
    <source>
    </source>
</evidence>
<evidence type="ECO:0000312" key="6">
    <source>
        <dbReference type="Proteomes" id="UP000000589"/>
    </source>
</evidence>
<evidence type="ECO:0007744" key="7">
    <source>
    </source>
</evidence>
<protein>
    <recommendedName>
        <fullName>Leucine-rich repeat and calponin homology domain-containing protein 4</fullName>
    </recommendedName>
</protein>
<dbReference type="EMBL" id="BC012525">
    <property type="protein sequence ID" value="AAH12525.1"/>
    <property type="molecule type" value="mRNA"/>
</dbReference>
<dbReference type="CCDS" id="CCDS19772.1">
    <molecule id="Q921G6-1"/>
</dbReference>
<dbReference type="CCDS" id="CCDS57392.1">
    <molecule id="Q921G6-2"/>
</dbReference>
<dbReference type="RefSeq" id="NP_001162123.1">
    <molecule id="Q921G6-2"/>
    <property type="nucleotide sequence ID" value="NM_001168652.1"/>
</dbReference>
<dbReference type="RefSeq" id="NP_666276.1">
    <molecule id="Q921G6-1"/>
    <property type="nucleotide sequence ID" value="NM_146164.2"/>
</dbReference>
<dbReference type="SMR" id="Q921G6"/>
<dbReference type="BioGRID" id="231166">
    <property type="interactions" value="3"/>
</dbReference>
<dbReference type="FunCoup" id="Q921G6">
    <property type="interactions" value="1092"/>
</dbReference>
<dbReference type="STRING" id="10090.ENSMUSP00000031734"/>
<dbReference type="GlyGen" id="Q921G6">
    <property type="glycosylation" value="1 site"/>
</dbReference>
<dbReference type="iPTMnet" id="Q921G6"/>
<dbReference type="PhosphoSitePlus" id="Q921G6"/>
<dbReference type="jPOST" id="Q921G6"/>
<dbReference type="PaxDb" id="10090-ENSMUSP00000031734"/>
<dbReference type="PeptideAtlas" id="Q921G6"/>
<dbReference type="ProteomicsDB" id="292362"/>
<dbReference type="ProteomicsDB" id="351227"/>
<dbReference type="Pumba" id="Q921G6"/>
<dbReference type="DNASU" id="231798"/>
<dbReference type="Ensembl" id="ENSMUST00000031734.16">
    <molecule id="Q921G6-1"/>
    <property type="protein sequence ID" value="ENSMUSP00000031734.10"/>
    <property type="gene ID" value="ENSMUSG00000093445.8"/>
</dbReference>
<dbReference type="Ensembl" id="ENSMUST00000176667.8">
    <molecule id="Q921G6-2"/>
    <property type="protein sequence ID" value="ENSMUSP00000135832.2"/>
    <property type="gene ID" value="ENSMUSG00000093445.8"/>
</dbReference>
<dbReference type="Ensembl" id="ENSMUST00000177545.2">
    <molecule id="Q921G6-1"/>
    <property type="protein sequence ID" value="ENSMUSP00000135286.2"/>
    <property type="gene ID" value="ENSMUSG00000029720.10"/>
</dbReference>
<dbReference type="GeneID" id="231798"/>
<dbReference type="KEGG" id="mmu:231798"/>
<dbReference type="AGR" id="MGI:1917193"/>
<dbReference type="CTD" id="4034"/>
<dbReference type="MGI" id="MGI:1917193">
    <property type="gene designation" value="Lrch4"/>
</dbReference>
<dbReference type="VEuPathDB" id="HostDB:ENSMUSG00000029720"/>
<dbReference type="VEuPathDB" id="HostDB:ENSMUSG00000093445"/>
<dbReference type="eggNOG" id="KOG0532">
    <property type="taxonomic scope" value="Eukaryota"/>
</dbReference>
<dbReference type="GeneTree" id="ENSGT00940000161668"/>
<dbReference type="HOGENOM" id="CLU_008231_2_0_1"/>
<dbReference type="InParanoid" id="Q921G6"/>
<dbReference type="OMA" id="RAPKQET"/>
<dbReference type="OrthoDB" id="6149831at2759"/>
<dbReference type="PhylomeDB" id="Q921G6"/>
<dbReference type="TreeFam" id="TF318428"/>
<dbReference type="BioGRID-ORCS" id="231798">
    <property type="hits" value="1 hit in 77 CRISPR screens"/>
</dbReference>
<dbReference type="PRO" id="PR:Q921G6"/>
<dbReference type="Proteomes" id="UP000000589">
    <property type="component" value="Chromosome 5"/>
</dbReference>
<dbReference type="RNAct" id="Q921G6">
    <property type="molecule type" value="protein"/>
</dbReference>
<dbReference type="Bgee" id="ENSMUSG00000093445">
    <property type="expression patterns" value="Expressed in granulocyte and 65 other cell types or tissues"/>
</dbReference>
<dbReference type="ExpressionAtlas" id="Q921G6">
    <property type="expression patterns" value="baseline and differential"/>
</dbReference>
<dbReference type="GO" id="GO:0005886">
    <property type="term" value="C:plasma membrane"/>
    <property type="evidence" value="ECO:0000314"/>
    <property type="project" value="UniProtKB"/>
</dbReference>
<dbReference type="GO" id="GO:0016605">
    <property type="term" value="C:PML body"/>
    <property type="evidence" value="ECO:0007669"/>
    <property type="project" value="Ensembl"/>
</dbReference>
<dbReference type="GO" id="GO:0001765">
    <property type="term" value="P:membrane raft assembly"/>
    <property type="evidence" value="ECO:0000314"/>
    <property type="project" value="UniProtKB"/>
</dbReference>
<dbReference type="GO" id="GO:0034123">
    <property type="term" value="P:positive regulation of toll-like receptor signaling pathway"/>
    <property type="evidence" value="ECO:0000314"/>
    <property type="project" value="UniProtKB"/>
</dbReference>
<dbReference type="CDD" id="cd21273">
    <property type="entry name" value="CH_LRCH4"/>
    <property type="match status" value="1"/>
</dbReference>
<dbReference type="FunFam" id="3.80.10.10:FF:000067">
    <property type="entry name" value="Leucine-rich repeat and calponin homology domain-containing protein 4 isoform 1"/>
    <property type="match status" value="1"/>
</dbReference>
<dbReference type="FunFam" id="1.10.418.10:FF:000056">
    <property type="entry name" value="leucine-rich repeat and calponin homology domain-containing protein 4 isoform X2"/>
    <property type="match status" value="1"/>
</dbReference>
<dbReference type="FunFam" id="3.80.10.10:FF:000081">
    <property type="entry name" value="leucine-rich repeat and calponin homology domain-containing protein 4 isoform X2"/>
    <property type="match status" value="1"/>
</dbReference>
<dbReference type="Gene3D" id="1.10.418.10">
    <property type="entry name" value="Calponin-like domain"/>
    <property type="match status" value="1"/>
</dbReference>
<dbReference type="Gene3D" id="3.80.10.10">
    <property type="entry name" value="Ribonuclease Inhibitor"/>
    <property type="match status" value="2"/>
</dbReference>
<dbReference type="InterPro" id="IPR001715">
    <property type="entry name" value="CH_dom"/>
</dbReference>
<dbReference type="InterPro" id="IPR036872">
    <property type="entry name" value="CH_dom_sf"/>
</dbReference>
<dbReference type="InterPro" id="IPR001611">
    <property type="entry name" value="Leu-rich_rpt"/>
</dbReference>
<dbReference type="InterPro" id="IPR003591">
    <property type="entry name" value="Leu-rich_rpt_typical-subtyp"/>
</dbReference>
<dbReference type="InterPro" id="IPR032675">
    <property type="entry name" value="LRR_dom_sf"/>
</dbReference>
<dbReference type="InterPro" id="IPR050216">
    <property type="entry name" value="LRR_domain-containing"/>
</dbReference>
<dbReference type="PANTHER" id="PTHR48051">
    <property type="match status" value="1"/>
</dbReference>
<dbReference type="PANTHER" id="PTHR48051:SF64">
    <property type="entry name" value="LEUCINE RICH REPEATS AND CALPONIN HOMOLOGY DOMAIN CONTAINING 4"/>
    <property type="match status" value="1"/>
</dbReference>
<dbReference type="Pfam" id="PF00307">
    <property type="entry name" value="CH"/>
    <property type="match status" value="1"/>
</dbReference>
<dbReference type="Pfam" id="PF13855">
    <property type="entry name" value="LRR_8"/>
    <property type="match status" value="2"/>
</dbReference>
<dbReference type="PRINTS" id="PR00019">
    <property type="entry name" value="LEURICHRPT"/>
</dbReference>
<dbReference type="SMART" id="SM00033">
    <property type="entry name" value="CH"/>
    <property type="match status" value="1"/>
</dbReference>
<dbReference type="SMART" id="SM00364">
    <property type="entry name" value="LRR_BAC"/>
    <property type="match status" value="4"/>
</dbReference>
<dbReference type="SMART" id="SM00369">
    <property type="entry name" value="LRR_TYP"/>
    <property type="match status" value="5"/>
</dbReference>
<dbReference type="SUPFAM" id="SSF47576">
    <property type="entry name" value="Calponin-homology domain, CH-domain"/>
    <property type="match status" value="1"/>
</dbReference>
<dbReference type="SUPFAM" id="SSF52058">
    <property type="entry name" value="L domain-like"/>
    <property type="match status" value="1"/>
</dbReference>
<dbReference type="PROSITE" id="PS50021">
    <property type="entry name" value="CH"/>
    <property type="match status" value="1"/>
</dbReference>
<dbReference type="PROSITE" id="PS51450">
    <property type="entry name" value="LRR"/>
    <property type="match status" value="7"/>
</dbReference>
<name>LRCH4_MOUSE</name>
<comment type="function">
    <text evidence="5">Accessory protein that regulates signaling by multiple TLRs, acting as a broad-spanning regulator of the innate immune response. In macrophages, binds LPS and promotes proper docking of LPS in lipid raft membrane. May be required for lipid raft maintenance.</text>
</comment>
<comment type="subcellular location">
    <subcellularLocation>
        <location evidence="5">Cell membrane</location>
        <topology evidence="2">Single-pass membrane protein</topology>
    </subcellularLocation>
</comment>
<comment type="alternative products">
    <event type="alternative splicing"/>
    <isoform>
        <id>Q921G6-1</id>
        <name>1</name>
        <sequence type="displayed"/>
    </isoform>
    <isoform>
        <id>Q921G6-2</id>
        <name>2</name>
        <sequence type="described" ref="VSP_061971 VSP_061972"/>
    </isoform>
</comment>
<comment type="tissue specificity">
    <text evidence="5">Widely expressed across tissues, with the most abundant expression in spleen, testes, thymus, intestine, and blood (PubMed:30523158). Expressed in macrophages (PubMed:30523158).</text>
</comment>
<comment type="induction">
    <text evidence="5">Expression is inhibited by LPS.</text>
</comment>